<name>HSLV_BACAC</name>
<organism>
    <name type="scientific">Bacillus anthracis (strain CDC 684 / NRRL 3495)</name>
    <dbReference type="NCBI Taxonomy" id="568206"/>
    <lineage>
        <taxon>Bacteria</taxon>
        <taxon>Bacillati</taxon>
        <taxon>Bacillota</taxon>
        <taxon>Bacilli</taxon>
        <taxon>Bacillales</taxon>
        <taxon>Bacillaceae</taxon>
        <taxon>Bacillus</taxon>
        <taxon>Bacillus cereus group</taxon>
    </lineage>
</organism>
<evidence type="ECO:0000255" key="1">
    <source>
        <dbReference type="HAMAP-Rule" id="MF_00248"/>
    </source>
</evidence>
<keyword id="KW-0021">Allosteric enzyme</keyword>
<keyword id="KW-0963">Cytoplasm</keyword>
<keyword id="KW-0378">Hydrolase</keyword>
<keyword id="KW-0479">Metal-binding</keyword>
<keyword id="KW-0645">Protease</keyword>
<keyword id="KW-0915">Sodium</keyword>
<keyword id="KW-0888">Threonine protease</keyword>
<accession>C3L797</accession>
<proteinExistence type="inferred from homology"/>
<comment type="function">
    <text evidence="1">Protease subunit of a proteasome-like degradation complex believed to be a general protein degrading machinery.</text>
</comment>
<comment type="catalytic activity">
    <reaction evidence="1">
        <text>ATP-dependent cleavage of peptide bonds with broad specificity.</text>
        <dbReference type="EC" id="3.4.25.2"/>
    </reaction>
</comment>
<comment type="activity regulation">
    <text evidence="1">Allosterically activated by HslU binding.</text>
</comment>
<comment type="subunit">
    <text evidence="1">A double ring-shaped homohexamer of HslV is capped on each side by a ring-shaped HslU homohexamer. The assembly of the HslU/HslV complex is dependent on binding of ATP.</text>
</comment>
<comment type="subcellular location">
    <subcellularLocation>
        <location evidence="1">Cytoplasm</location>
    </subcellularLocation>
</comment>
<comment type="similarity">
    <text evidence="1">Belongs to the peptidase T1B family. HslV subfamily.</text>
</comment>
<gene>
    <name evidence="1" type="primary">hslV</name>
    <name type="ordered locus">BAMEG_0664</name>
</gene>
<sequence>MGNFHATTIFAVHHNGECAMAGDGQVTMGNAVVMKHTARKVRKLFQGKVLAGFAGSVADAFTLFEMFEGKLEEYNGNLQRAAVEMAKQWRGDKMLRQLEAMLIVMDKTTMLLVSGTGEVIEPDDGILAIGSGGNYALSAGRALKQYASEHLTAKQIAKASLEIAGDICVYTNHNIIVEEL</sequence>
<dbReference type="EC" id="3.4.25.2" evidence="1"/>
<dbReference type="EMBL" id="CP001215">
    <property type="protein sequence ID" value="ACP14945.1"/>
    <property type="molecule type" value="Genomic_DNA"/>
</dbReference>
<dbReference type="RefSeq" id="WP_000526272.1">
    <property type="nucleotide sequence ID" value="NC_012581.1"/>
</dbReference>
<dbReference type="SMR" id="C3L797"/>
<dbReference type="MEROPS" id="T01.007"/>
<dbReference type="GeneID" id="45023658"/>
<dbReference type="KEGG" id="bah:BAMEG_0664"/>
<dbReference type="HOGENOM" id="CLU_093872_1_0_9"/>
<dbReference type="GO" id="GO:0009376">
    <property type="term" value="C:HslUV protease complex"/>
    <property type="evidence" value="ECO:0007669"/>
    <property type="project" value="UniProtKB-UniRule"/>
</dbReference>
<dbReference type="GO" id="GO:0005839">
    <property type="term" value="C:proteasome core complex"/>
    <property type="evidence" value="ECO:0007669"/>
    <property type="project" value="InterPro"/>
</dbReference>
<dbReference type="GO" id="GO:0046872">
    <property type="term" value="F:metal ion binding"/>
    <property type="evidence" value="ECO:0007669"/>
    <property type="project" value="UniProtKB-KW"/>
</dbReference>
<dbReference type="GO" id="GO:0004298">
    <property type="term" value="F:threonine-type endopeptidase activity"/>
    <property type="evidence" value="ECO:0007669"/>
    <property type="project" value="UniProtKB-KW"/>
</dbReference>
<dbReference type="GO" id="GO:0051603">
    <property type="term" value="P:proteolysis involved in protein catabolic process"/>
    <property type="evidence" value="ECO:0007669"/>
    <property type="project" value="InterPro"/>
</dbReference>
<dbReference type="CDD" id="cd01913">
    <property type="entry name" value="protease_HslV"/>
    <property type="match status" value="1"/>
</dbReference>
<dbReference type="Gene3D" id="3.60.20.10">
    <property type="entry name" value="Glutamine Phosphoribosylpyrophosphate, subunit 1, domain 1"/>
    <property type="match status" value="1"/>
</dbReference>
<dbReference type="HAMAP" id="MF_00248">
    <property type="entry name" value="HslV"/>
    <property type="match status" value="1"/>
</dbReference>
<dbReference type="InterPro" id="IPR022281">
    <property type="entry name" value="ATP-dep_Prtase_HsIV_su"/>
</dbReference>
<dbReference type="InterPro" id="IPR029055">
    <property type="entry name" value="Ntn_hydrolases_N"/>
</dbReference>
<dbReference type="InterPro" id="IPR001353">
    <property type="entry name" value="Proteasome_sua/b"/>
</dbReference>
<dbReference type="InterPro" id="IPR023333">
    <property type="entry name" value="Proteasome_suB-type"/>
</dbReference>
<dbReference type="NCBIfam" id="TIGR03692">
    <property type="entry name" value="ATP_dep_HslV"/>
    <property type="match status" value="1"/>
</dbReference>
<dbReference type="NCBIfam" id="NF003964">
    <property type="entry name" value="PRK05456.1"/>
    <property type="match status" value="1"/>
</dbReference>
<dbReference type="PANTHER" id="PTHR32194:SF0">
    <property type="entry name" value="ATP-DEPENDENT PROTEASE SUBUNIT HSLV"/>
    <property type="match status" value="1"/>
</dbReference>
<dbReference type="PANTHER" id="PTHR32194">
    <property type="entry name" value="METALLOPROTEASE TLDD"/>
    <property type="match status" value="1"/>
</dbReference>
<dbReference type="Pfam" id="PF00227">
    <property type="entry name" value="Proteasome"/>
    <property type="match status" value="1"/>
</dbReference>
<dbReference type="PIRSF" id="PIRSF039093">
    <property type="entry name" value="HslV"/>
    <property type="match status" value="1"/>
</dbReference>
<dbReference type="SUPFAM" id="SSF56235">
    <property type="entry name" value="N-terminal nucleophile aminohydrolases (Ntn hydrolases)"/>
    <property type="match status" value="1"/>
</dbReference>
<dbReference type="PROSITE" id="PS51476">
    <property type="entry name" value="PROTEASOME_BETA_2"/>
    <property type="match status" value="1"/>
</dbReference>
<protein>
    <recommendedName>
        <fullName evidence="1">ATP-dependent protease subunit HslV</fullName>
        <ecNumber evidence="1">3.4.25.2</ecNumber>
    </recommendedName>
</protein>
<feature type="chain" id="PRO_1000192668" description="ATP-dependent protease subunit HslV">
    <location>
        <begin position="1"/>
        <end position="180"/>
    </location>
</feature>
<feature type="active site" evidence="1">
    <location>
        <position position="7"/>
    </location>
</feature>
<feature type="binding site" evidence="1">
    <location>
        <position position="165"/>
    </location>
    <ligand>
        <name>Na(+)</name>
        <dbReference type="ChEBI" id="CHEBI:29101"/>
    </ligand>
</feature>
<feature type="binding site" evidence="1">
    <location>
        <position position="168"/>
    </location>
    <ligand>
        <name>Na(+)</name>
        <dbReference type="ChEBI" id="CHEBI:29101"/>
    </ligand>
</feature>
<feature type="binding site" evidence="1">
    <location>
        <position position="171"/>
    </location>
    <ligand>
        <name>Na(+)</name>
        <dbReference type="ChEBI" id="CHEBI:29101"/>
    </ligand>
</feature>
<reference key="1">
    <citation type="submission" date="2008-10" db="EMBL/GenBank/DDBJ databases">
        <title>Genome sequence of Bacillus anthracis str. CDC 684.</title>
        <authorList>
            <person name="Dodson R.J."/>
            <person name="Munk A.C."/>
            <person name="Brettin T."/>
            <person name="Bruce D."/>
            <person name="Detter C."/>
            <person name="Tapia R."/>
            <person name="Han C."/>
            <person name="Sutton G."/>
            <person name="Sims D."/>
        </authorList>
    </citation>
    <scope>NUCLEOTIDE SEQUENCE [LARGE SCALE GENOMIC DNA]</scope>
    <source>
        <strain>CDC 684 / NRRL 3495</strain>
    </source>
</reference>